<protein>
    <recommendedName>
        <fullName evidence="1">Succinate--CoA ligase [ADP-forming] subunit beta</fullName>
        <ecNumber evidence="1">6.2.1.5</ecNumber>
    </recommendedName>
    <alternativeName>
        <fullName evidence="1">Succinyl-CoA synthetase subunit beta</fullName>
        <shortName evidence="1">SCS-beta</shortName>
    </alternativeName>
</protein>
<name>SUCC_ANASK</name>
<dbReference type="EC" id="6.2.1.5" evidence="1"/>
<dbReference type="EMBL" id="CP001131">
    <property type="protein sequence ID" value="ACG73460.1"/>
    <property type="molecule type" value="Genomic_DNA"/>
</dbReference>
<dbReference type="RefSeq" id="WP_012526259.1">
    <property type="nucleotide sequence ID" value="NC_011145.1"/>
</dbReference>
<dbReference type="SMR" id="B4UDP4"/>
<dbReference type="KEGG" id="ank:AnaeK_2233"/>
<dbReference type="HOGENOM" id="CLU_037430_0_2_7"/>
<dbReference type="OrthoDB" id="9802602at2"/>
<dbReference type="UniPathway" id="UPA00223">
    <property type="reaction ID" value="UER00999"/>
</dbReference>
<dbReference type="Proteomes" id="UP000001871">
    <property type="component" value="Chromosome"/>
</dbReference>
<dbReference type="GO" id="GO:0005829">
    <property type="term" value="C:cytosol"/>
    <property type="evidence" value="ECO:0007669"/>
    <property type="project" value="TreeGrafter"/>
</dbReference>
<dbReference type="GO" id="GO:0042709">
    <property type="term" value="C:succinate-CoA ligase complex"/>
    <property type="evidence" value="ECO:0007669"/>
    <property type="project" value="TreeGrafter"/>
</dbReference>
<dbReference type="GO" id="GO:0005524">
    <property type="term" value="F:ATP binding"/>
    <property type="evidence" value="ECO:0007669"/>
    <property type="project" value="UniProtKB-UniRule"/>
</dbReference>
<dbReference type="GO" id="GO:0000287">
    <property type="term" value="F:magnesium ion binding"/>
    <property type="evidence" value="ECO:0007669"/>
    <property type="project" value="UniProtKB-UniRule"/>
</dbReference>
<dbReference type="GO" id="GO:0004775">
    <property type="term" value="F:succinate-CoA ligase (ADP-forming) activity"/>
    <property type="evidence" value="ECO:0007669"/>
    <property type="project" value="UniProtKB-UniRule"/>
</dbReference>
<dbReference type="GO" id="GO:0004776">
    <property type="term" value="F:succinate-CoA ligase (GDP-forming) activity"/>
    <property type="evidence" value="ECO:0007669"/>
    <property type="project" value="RHEA"/>
</dbReference>
<dbReference type="GO" id="GO:0006104">
    <property type="term" value="P:succinyl-CoA metabolic process"/>
    <property type="evidence" value="ECO:0007669"/>
    <property type="project" value="TreeGrafter"/>
</dbReference>
<dbReference type="GO" id="GO:0006099">
    <property type="term" value="P:tricarboxylic acid cycle"/>
    <property type="evidence" value="ECO:0007669"/>
    <property type="project" value="UniProtKB-UniRule"/>
</dbReference>
<dbReference type="FunFam" id="3.30.1490.20:FF:000002">
    <property type="entry name" value="Succinate--CoA ligase [ADP-forming] subunit beta"/>
    <property type="match status" value="1"/>
</dbReference>
<dbReference type="FunFam" id="3.30.470.20:FF:000002">
    <property type="entry name" value="Succinate--CoA ligase [ADP-forming] subunit beta"/>
    <property type="match status" value="1"/>
</dbReference>
<dbReference type="FunFam" id="3.40.50.261:FF:000001">
    <property type="entry name" value="Succinate--CoA ligase [ADP-forming] subunit beta"/>
    <property type="match status" value="1"/>
</dbReference>
<dbReference type="Gene3D" id="3.30.1490.20">
    <property type="entry name" value="ATP-grasp fold, A domain"/>
    <property type="match status" value="1"/>
</dbReference>
<dbReference type="Gene3D" id="3.30.470.20">
    <property type="entry name" value="ATP-grasp fold, B domain"/>
    <property type="match status" value="1"/>
</dbReference>
<dbReference type="Gene3D" id="3.40.50.261">
    <property type="entry name" value="Succinyl-CoA synthetase domains"/>
    <property type="match status" value="1"/>
</dbReference>
<dbReference type="HAMAP" id="MF_00558">
    <property type="entry name" value="Succ_CoA_beta"/>
    <property type="match status" value="1"/>
</dbReference>
<dbReference type="InterPro" id="IPR013650">
    <property type="entry name" value="ATP-grasp_succ-CoA_synth-type"/>
</dbReference>
<dbReference type="InterPro" id="IPR013815">
    <property type="entry name" value="ATP_grasp_subdomain_1"/>
</dbReference>
<dbReference type="InterPro" id="IPR017866">
    <property type="entry name" value="Succ-CoA_synthase_bsu_CS"/>
</dbReference>
<dbReference type="InterPro" id="IPR005811">
    <property type="entry name" value="SUCC_ACL_C"/>
</dbReference>
<dbReference type="InterPro" id="IPR005809">
    <property type="entry name" value="Succ_CoA_ligase-like_bsu"/>
</dbReference>
<dbReference type="InterPro" id="IPR016102">
    <property type="entry name" value="Succinyl-CoA_synth-like"/>
</dbReference>
<dbReference type="NCBIfam" id="NF001913">
    <property type="entry name" value="PRK00696.1"/>
    <property type="match status" value="1"/>
</dbReference>
<dbReference type="NCBIfam" id="TIGR01016">
    <property type="entry name" value="sucCoAbeta"/>
    <property type="match status" value="1"/>
</dbReference>
<dbReference type="PANTHER" id="PTHR11815:SF10">
    <property type="entry name" value="SUCCINATE--COA LIGASE [GDP-FORMING] SUBUNIT BETA, MITOCHONDRIAL"/>
    <property type="match status" value="1"/>
</dbReference>
<dbReference type="PANTHER" id="PTHR11815">
    <property type="entry name" value="SUCCINYL-COA SYNTHETASE BETA CHAIN"/>
    <property type="match status" value="1"/>
</dbReference>
<dbReference type="Pfam" id="PF08442">
    <property type="entry name" value="ATP-grasp_2"/>
    <property type="match status" value="1"/>
</dbReference>
<dbReference type="Pfam" id="PF00549">
    <property type="entry name" value="Ligase_CoA"/>
    <property type="match status" value="1"/>
</dbReference>
<dbReference type="PIRSF" id="PIRSF001554">
    <property type="entry name" value="SucCS_beta"/>
    <property type="match status" value="1"/>
</dbReference>
<dbReference type="SUPFAM" id="SSF56059">
    <property type="entry name" value="Glutathione synthetase ATP-binding domain-like"/>
    <property type="match status" value="1"/>
</dbReference>
<dbReference type="SUPFAM" id="SSF52210">
    <property type="entry name" value="Succinyl-CoA synthetase domains"/>
    <property type="match status" value="1"/>
</dbReference>
<dbReference type="PROSITE" id="PS01217">
    <property type="entry name" value="SUCCINYL_COA_LIG_3"/>
    <property type="match status" value="1"/>
</dbReference>
<reference key="1">
    <citation type="submission" date="2008-08" db="EMBL/GenBank/DDBJ databases">
        <title>Complete sequence of Anaeromyxobacter sp. K.</title>
        <authorList>
            <consortium name="US DOE Joint Genome Institute"/>
            <person name="Lucas S."/>
            <person name="Copeland A."/>
            <person name="Lapidus A."/>
            <person name="Glavina del Rio T."/>
            <person name="Dalin E."/>
            <person name="Tice H."/>
            <person name="Bruce D."/>
            <person name="Goodwin L."/>
            <person name="Pitluck S."/>
            <person name="Saunders E."/>
            <person name="Brettin T."/>
            <person name="Detter J.C."/>
            <person name="Han C."/>
            <person name="Larimer F."/>
            <person name="Land M."/>
            <person name="Hauser L."/>
            <person name="Kyrpides N."/>
            <person name="Ovchinnikiva G."/>
            <person name="Beliaev A."/>
        </authorList>
    </citation>
    <scope>NUCLEOTIDE SEQUENCE [LARGE SCALE GENOMIC DNA]</scope>
    <source>
        <strain>K</strain>
    </source>
</reference>
<proteinExistence type="inferred from homology"/>
<evidence type="ECO:0000255" key="1">
    <source>
        <dbReference type="HAMAP-Rule" id="MF_00558"/>
    </source>
</evidence>
<organism>
    <name type="scientific">Anaeromyxobacter sp. (strain K)</name>
    <dbReference type="NCBI Taxonomy" id="447217"/>
    <lineage>
        <taxon>Bacteria</taxon>
        <taxon>Pseudomonadati</taxon>
        <taxon>Myxococcota</taxon>
        <taxon>Myxococcia</taxon>
        <taxon>Myxococcales</taxon>
        <taxon>Cystobacterineae</taxon>
        <taxon>Anaeromyxobacteraceae</taxon>
        <taxon>Anaeromyxobacter</taxon>
    </lineage>
</organism>
<gene>
    <name evidence="1" type="primary">sucC</name>
    <name type="ordered locus">AnaeK_2233</name>
</gene>
<comment type="function">
    <text evidence="1">Succinyl-CoA synthetase functions in the citric acid cycle (TCA), coupling the hydrolysis of succinyl-CoA to the synthesis of either ATP or GTP and thus represents the only step of substrate-level phosphorylation in the TCA. The beta subunit provides nucleotide specificity of the enzyme and binds the substrate succinate, while the binding sites for coenzyme A and phosphate are found in the alpha subunit.</text>
</comment>
<comment type="catalytic activity">
    <reaction evidence="1">
        <text>succinate + ATP + CoA = succinyl-CoA + ADP + phosphate</text>
        <dbReference type="Rhea" id="RHEA:17661"/>
        <dbReference type="ChEBI" id="CHEBI:30031"/>
        <dbReference type="ChEBI" id="CHEBI:30616"/>
        <dbReference type="ChEBI" id="CHEBI:43474"/>
        <dbReference type="ChEBI" id="CHEBI:57287"/>
        <dbReference type="ChEBI" id="CHEBI:57292"/>
        <dbReference type="ChEBI" id="CHEBI:456216"/>
        <dbReference type="EC" id="6.2.1.5"/>
    </reaction>
    <physiologicalReaction direction="right-to-left" evidence="1">
        <dbReference type="Rhea" id="RHEA:17663"/>
    </physiologicalReaction>
</comment>
<comment type="catalytic activity">
    <reaction evidence="1">
        <text>GTP + succinate + CoA = succinyl-CoA + GDP + phosphate</text>
        <dbReference type="Rhea" id="RHEA:22120"/>
        <dbReference type="ChEBI" id="CHEBI:30031"/>
        <dbReference type="ChEBI" id="CHEBI:37565"/>
        <dbReference type="ChEBI" id="CHEBI:43474"/>
        <dbReference type="ChEBI" id="CHEBI:57287"/>
        <dbReference type="ChEBI" id="CHEBI:57292"/>
        <dbReference type="ChEBI" id="CHEBI:58189"/>
    </reaction>
    <physiologicalReaction direction="right-to-left" evidence="1">
        <dbReference type="Rhea" id="RHEA:22122"/>
    </physiologicalReaction>
</comment>
<comment type="cofactor">
    <cofactor evidence="1">
        <name>Mg(2+)</name>
        <dbReference type="ChEBI" id="CHEBI:18420"/>
    </cofactor>
    <text evidence="1">Binds 1 Mg(2+) ion per subunit.</text>
</comment>
<comment type="pathway">
    <text evidence="1">Carbohydrate metabolism; tricarboxylic acid cycle; succinate from succinyl-CoA (ligase route): step 1/1.</text>
</comment>
<comment type="subunit">
    <text evidence="1">Heterotetramer of two alpha and two beta subunits.</text>
</comment>
<comment type="similarity">
    <text evidence="1">Belongs to the succinate/malate CoA ligase beta subunit family.</text>
</comment>
<sequence>MKIHEYQAKEILRKFGVAVPRGYLAVTPLEAEGAARQLGGGISAVKAQIHAGGRGKGGGVKLARSPDEARQHAEAMLGMMLKTPQTGPDGQEVRKVYVEEGCRIARELYLGMTLDREIGRLAVMASVEGGVDIEEVAAKHPDKILREWISPLTGLMPFQARRLAFGLGLTGDSVTAFVRFATGLYNAYVATDASLAEINPLVITVGGEVLALDAKMNFDDNALYRHPDIAAMRDPDEEDPKETQAKEYDLSYIALDGDIGCMVNGAGLAMATMDVIKLSGGQPANFLDVGGGADEDKVTAAFKIILSDPHVKAVLVNIFGGIMKCDVIANGIVAAAKQVGLSIPLVVRLEGTNVELGKDILAHSELKIIPADDLGDAARKVVQAARAA</sequence>
<accession>B4UDP4</accession>
<feature type="chain" id="PRO_1000129158" description="Succinate--CoA ligase [ADP-forming] subunit beta">
    <location>
        <begin position="1"/>
        <end position="388"/>
    </location>
</feature>
<feature type="domain" description="ATP-grasp" evidence="1">
    <location>
        <begin position="9"/>
        <end position="244"/>
    </location>
</feature>
<feature type="binding site" evidence="1">
    <location>
        <position position="46"/>
    </location>
    <ligand>
        <name>ATP</name>
        <dbReference type="ChEBI" id="CHEBI:30616"/>
    </ligand>
</feature>
<feature type="binding site" evidence="1">
    <location>
        <begin position="53"/>
        <end position="55"/>
    </location>
    <ligand>
        <name>ATP</name>
        <dbReference type="ChEBI" id="CHEBI:30616"/>
    </ligand>
</feature>
<feature type="binding site" evidence="1">
    <location>
        <position position="99"/>
    </location>
    <ligand>
        <name>ATP</name>
        <dbReference type="ChEBI" id="CHEBI:30616"/>
    </ligand>
</feature>
<feature type="binding site" evidence="1">
    <location>
        <position position="102"/>
    </location>
    <ligand>
        <name>ATP</name>
        <dbReference type="ChEBI" id="CHEBI:30616"/>
    </ligand>
</feature>
<feature type="binding site" evidence="1">
    <location>
        <position position="107"/>
    </location>
    <ligand>
        <name>ATP</name>
        <dbReference type="ChEBI" id="CHEBI:30616"/>
    </ligand>
</feature>
<feature type="binding site" evidence="1">
    <location>
        <position position="199"/>
    </location>
    <ligand>
        <name>Mg(2+)</name>
        <dbReference type="ChEBI" id="CHEBI:18420"/>
    </ligand>
</feature>
<feature type="binding site" evidence="1">
    <location>
        <position position="213"/>
    </location>
    <ligand>
        <name>Mg(2+)</name>
        <dbReference type="ChEBI" id="CHEBI:18420"/>
    </ligand>
</feature>
<feature type="binding site" evidence="1">
    <location>
        <position position="264"/>
    </location>
    <ligand>
        <name>substrate</name>
        <note>ligand shared with subunit alpha</note>
    </ligand>
</feature>
<feature type="binding site" evidence="1">
    <location>
        <begin position="321"/>
        <end position="323"/>
    </location>
    <ligand>
        <name>substrate</name>
        <note>ligand shared with subunit alpha</note>
    </ligand>
</feature>
<keyword id="KW-0067">ATP-binding</keyword>
<keyword id="KW-0436">Ligase</keyword>
<keyword id="KW-0460">Magnesium</keyword>
<keyword id="KW-0479">Metal-binding</keyword>
<keyword id="KW-0547">Nucleotide-binding</keyword>
<keyword id="KW-0816">Tricarboxylic acid cycle</keyword>